<dbReference type="EMBL" id="CP000673">
    <property type="protein sequence ID" value="EDK32312.1"/>
    <property type="molecule type" value="Genomic_DNA"/>
</dbReference>
<dbReference type="RefSeq" id="WP_011988837.1">
    <property type="nucleotide sequence ID" value="NC_009706.1"/>
</dbReference>
<dbReference type="SMR" id="A5N4T1"/>
<dbReference type="STRING" id="431943.CKL_0258"/>
<dbReference type="KEGG" id="ckl:CKL_0258"/>
<dbReference type="eggNOG" id="COG0102">
    <property type="taxonomic scope" value="Bacteria"/>
</dbReference>
<dbReference type="HOGENOM" id="CLU_082184_2_2_9"/>
<dbReference type="Proteomes" id="UP000002411">
    <property type="component" value="Chromosome"/>
</dbReference>
<dbReference type="GO" id="GO:0022625">
    <property type="term" value="C:cytosolic large ribosomal subunit"/>
    <property type="evidence" value="ECO:0007669"/>
    <property type="project" value="TreeGrafter"/>
</dbReference>
<dbReference type="GO" id="GO:0003729">
    <property type="term" value="F:mRNA binding"/>
    <property type="evidence" value="ECO:0007669"/>
    <property type="project" value="TreeGrafter"/>
</dbReference>
<dbReference type="GO" id="GO:0003735">
    <property type="term" value="F:structural constituent of ribosome"/>
    <property type="evidence" value="ECO:0007669"/>
    <property type="project" value="InterPro"/>
</dbReference>
<dbReference type="GO" id="GO:0017148">
    <property type="term" value="P:negative regulation of translation"/>
    <property type="evidence" value="ECO:0007669"/>
    <property type="project" value="TreeGrafter"/>
</dbReference>
<dbReference type="GO" id="GO:0006412">
    <property type="term" value="P:translation"/>
    <property type="evidence" value="ECO:0007669"/>
    <property type="project" value="UniProtKB-UniRule"/>
</dbReference>
<dbReference type="CDD" id="cd00392">
    <property type="entry name" value="Ribosomal_L13"/>
    <property type="match status" value="1"/>
</dbReference>
<dbReference type="FunFam" id="3.90.1180.10:FF:000001">
    <property type="entry name" value="50S ribosomal protein L13"/>
    <property type="match status" value="1"/>
</dbReference>
<dbReference type="Gene3D" id="3.90.1180.10">
    <property type="entry name" value="Ribosomal protein L13"/>
    <property type="match status" value="1"/>
</dbReference>
<dbReference type="HAMAP" id="MF_01366">
    <property type="entry name" value="Ribosomal_uL13"/>
    <property type="match status" value="1"/>
</dbReference>
<dbReference type="InterPro" id="IPR005822">
    <property type="entry name" value="Ribosomal_uL13"/>
</dbReference>
<dbReference type="InterPro" id="IPR005823">
    <property type="entry name" value="Ribosomal_uL13_bac-type"/>
</dbReference>
<dbReference type="InterPro" id="IPR023563">
    <property type="entry name" value="Ribosomal_uL13_CS"/>
</dbReference>
<dbReference type="InterPro" id="IPR036899">
    <property type="entry name" value="Ribosomal_uL13_sf"/>
</dbReference>
<dbReference type="NCBIfam" id="TIGR01066">
    <property type="entry name" value="rplM_bact"/>
    <property type="match status" value="1"/>
</dbReference>
<dbReference type="PANTHER" id="PTHR11545:SF2">
    <property type="entry name" value="LARGE RIBOSOMAL SUBUNIT PROTEIN UL13M"/>
    <property type="match status" value="1"/>
</dbReference>
<dbReference type="PANTHER" id="PTHR11545">
    <property type="entry name" value="RIBOSOMAL PROTEIN L13"/>
    <property type="match status" value="1"/>
</dbReference>
<dbReference type="Pfam" id="PF00572">
    <property type="entry name" value="Ribosomal_L13"/>
    <property type="match status" value="1"/>
</dbReference>
<dbReference type="PIRSF" id="PIRSF002181">
    <property type="entry name" value="Ribosomal_L13"/>
    <property type="match status" value="1"/>
</dbReference>
<dbReference type="SUPFAM" id="SSF52161">
    <property type="entry name" value="Ribosomal protein L13"/>
    <property type="match status" value="1"/>
</dbReference>
<dbReference type="PROSITE" id="PS00783">
    <property type="entry name" value="RIBOSOMAL_L13"/>
    <property type="match status" value="1"/>
</dbReference>
<protein>
    <recommendedName>
        <fullName evidence="1">Large ribosomal subunit protein uL13</fullName>
    </recommendedName>
    <alternativeName>
        <fullName evidence="2">50S ribosomal protein L13</fullName>
    </alternativeName>
</protein>
<accession>A5N4T1</accession>
<feature type="chain" id="PRO_1000087081" description="Large ribosomal subunit protein uL13">
    <location>
        <begin position="1"/>
        <end position="144"/>
    </location>
</feature>
<evidence type="ECO:0000255" key="1">
    <source>
        <dbReference type="HAMAP-Rule" id="MF_01366"/>
    </source>
</evidence>
<evidence type="ECO:0000305" key="2"/>
<reference key="1">
    <citation type="journal article" date="2008" name="Proc. Natl. Acad. Sci. U.S.A.">
        <title>The genome of Clostridium kluyveri, a strict anaerobe with unique metabolic features.</title>
        <authorList>
            <person name="Seedorf H."/>
            <person name="Fricke W.F."/>
            <person name="Veith B."/>
            <person name="Brueggemann H."/>
            <person name="Liesegang H."/>
            <person name="Strittmatter A."/>
            <person name="Miethke M."/>
            <person name="Buckel W."/>
            <person name="Hinderberger J."/>
            <person name="Li F."/>
            <person name="Hagemeier C."/>
            <person name="Thauer R.K."/>
            <person name="Gottschalk G."/>
        </authorList>
    </citation>
    <scope>NUCLEOTIDE SEQUENCE [LARGE SCALE GENOMIC DNA]</scope>
    <source>
        <strain>ATCC 8527 / DSM 555 / NBRC 12016 / NCIMB 10680 / K1</strain>
    </source>
</reference>
<sequence>MKSYIAKAEQIERKWYVVDAAGKPLGRVASQVASVLRGKHKPIFTPHVDTGDFVIVINSEKVLLTGKKLDQKMLRHHSLYPGGLKETPYREALNKKPEFVFQEAVRRMLPKGVLGRKMLKKLKVYRGTEHNNEAQKPEVLELKY</sequence>
<keyword id="KW-1185">Reference proteome</keyword>
<keyword id="KW-0687">Ribonucleoprotein</keyword>
<keyword id="KW-0689">Ribosomal protein</keyword>
<gene>
    <name evidence="1" type="primary">rplM</name>
    <name type="ordered locus">CKL_0258</name>
</gene>
<comment type="function">
    <text evidence="1">This protein is one of the early assembly proteins of the 50S ribosomal subunit, although it is not seen to bind rRNA by itself. It is important during the early stages of 50S assembly.</text>
</comment>
<comment type="subunit">
    <text evidence="1">Part of the 50S ribosomal subunit.</text>
</comment>
<comment type="similarity">
    <text evidence="1">Belongs to the universal ribosomal protein uL13 family.</text>
</comment>
<organism>
    <name type="scientific">Clostridium kluyveri (strain ATCC 8527 / DSM 555 / NBRC 12016 / NCIMB 10680 / K1)</name>
    <dbReference type="NCBI Taxonomy" id="431943"/>
    <lineage>
        <taxon>Bacteria</taxon>
        <taxon>Bacillati</taxon>
        <taxon>Bacillota</taxon>
        <taxon>Clostridia</taxon>
        <taxon>Eubacteriales</taxon>
        <taxon>Clostridiaceae</taxon>
        <taxon>Clostridium</taxon>
    </lineage>
</organism>
<proteinExistence type="inferred from homology"/>
<name>RL13_CLOK5</name>